<proteinExistence type="inferred from homology"/>
<keyword id="KW-0312">Gluconeogenesis</keyword>
<keyword id="KW-0324">Glycolysis</keyword>
<keyword id="KW-0413">Isomerase</keyword>
<accession>A9IFJ0</accession>
<name>GPMA_BORPD</name>
<dbReference type="EC" id="5.4.2.11" evidence="1"/>
<dbReference type="EMBL" id="AM902716">
    <property type="protein sequence ID" value="CAP45046.1"/>
    <property type="molecule type" value="Genomic_DNA"/>
</dbReference>
<dbReference type="SMR" id="A9IFJ0"/>
<dbReference type="STRING" id="94624.Bpet4694"/>
<dbReference type="KEGG" id="bpt:Bpet4694"/>
<dbReference type="eggNOG" id="COG0588">
    <property type="taxonomic scope" value="Bacteria"/>
</dbReference>
<dbReference type="UniPathway" id="UPA00109">
    <property type="reaction ID" value="UER00186"/>
</dbReference>
<dbReference type="Proteomes" id="UP000001225">
    <property type="component" value="Chromosome"/>
</dbReference>
<dbReference type="GO" id="GO:0004619">
    <property type="term" value="F:phosphoglycerate mutase activity"/>
    <property type="evidence" value="ECO:0007669"/>
    <property type="project" value="UniProtKB-EC"/>
</dbReference>
<dbReference type="GO" id="GO:0006094">
    <property type="term" value="P:gluconeogenesis"/>
    <property type="evidence" value="ECO:0007669"/>
    <property type="project" value="UniProtKB-UniRule"/>
</dbReference>
<dbReference type="GO" id="GO:0006096">
    <property type="term" value="P:glycolytic process"/>
    <property type="evidence" value="ECO:0007669"/>
    <property type="project" value="UniProtKB-UniRule"/>
</dbReference>
<dbReference type="CDD" id="cd07067">
    <property type="entry name" value="HP_PGM_like"/>
    <property type="match status" value="1"/>
</dbReference>
<dbReference type="FunFam" id="3.40.50.1240:FF:000003">
    <property type="entry name" value="2,3-bisphosphoglycerate-dependent phosphoglycerate mutase"/>
    <property type="match status" value="1"/>
</dbReference>
<dbReference type="Gene3D" id="3.40.50.1240">
    <property type="entry name" value="Phosphoglycerate mutase-like"/>
    <property type="match status" value="1"/>
</dbReference>
<dbReference type="HAMAP" id="MF_01039">
    <property type="entry name" value="PGAM_GpmA"/>
    <property type="match status" value="1"/>
</dbReference>
<dbReference type="InterPro" id="IPR013078">
    <property type="entry name" value="His_Pase_superF_clade-1"/>
</dbReference>
<dbReference type="InterPro" id="IPR029033">
    <property type="entry name" value="His_PPase_superfam"/>
</dbReference>
<dbReference type="InterPro" id="IPR001345">
    <property type="entry name" value="PG/BPGM_mutase_AS"/>
</dbReference>
<dbReference type="InterPro" id="IPR005952">
    <property type="entry name" value="Phosphogly_mut1"/>
</dbReference>
<dbReference type="NCBIfam" id="TIGR01258">
    <property type="entry name" value="pgm_1"/>
    <property type="match status" value="1"/>
</dbReference>
<dbReference type="NCBIfam" id="NF010713">
    <property type="entry name" value="PRK14115.1"/>
    <property type="match status" value="1"/>
</dbReference>
<dbReference type="PANTHER" id="PTHR11931">
    <property type="entry name" value="PHOSPHOGLYCERATE MUTASE"/>
    <property type="match status" value="1"/>
</dbReference>
<dbReference type="Pfam" id="PF00300">
    <property type="entry name" value="His_Phos_1"/>
    <property type="match status" value="2"/>
</dbReference>
<dbReference type="PIRSF" id="PIRSF000709">
    <property type="entry name" value="6PFK_2-Ptase"/>
    <property type="match status" value="1"/>
</dbReference>
<dbReference type="SMART" id="SM00855">
    <property type="entry name" value="PGAM"/>
    <property type="match status" value="1"/>
</dbReference>
<dbReference type="SUPFAM" id="SSF53254">
    <property type="entry name" value="Phosphoglycerate mutase-like"/>
    <property type="match status" value="1"/>
</dbReference>
<dbReference type="PROSITE" id="PS00175">
    <property type="entry name" value="PG_MUTASE"/>
    <property type="match status" value="1"/>
</dbReference>
<gene>
    <name evidence="1" type="primary">gpmA</name>
    <name type="ordered locus">Bpet4694</name>
</gene>
<feature type="chain" id="PRO_1000135924" description="2,3-bisphosphoglycerate-dependent phosphoglycerate mutase">
    <location>
        <begin position="1"/>
        <end position="250"/>
    </location>
</feature>
<feature type="active site" description="Tele-phosphohistidine intermediate" evidence="1">
    <location>
        <position position="9"/>
    </location>
</feature>
<feature type="active site" description="Proton donor/acceptor" evidence="1">
    <location>
        <position position="87"/>
    </location>
</feature>
<feature type="binding site" evidence="1">
    <location>
        <begin position="8"/>
        <end position="15"/>
    </location>
    <ligand>
        <name>substrate</name>
    </ligand>
</feature>
<feature type="binding site" evidence="1">
    <location>
        <begin position="21"/>
        <end position="22"/>
    </location>
    <ligand>
        <name>substrate</name>
    </ligand>
</feature>
<feature type="binding site" evidence="1">
    <location>
        <position position="60"/>
    </location>
    <ligand>
        <name>substrate</name>
    </ligand>
</feature>
<feature type="binding site" evidence="1">
    <location>
        <begin position="87"/>
        <end position="90"/>
    </location>
    <ligand>
        <name>substrate</name>
    </ligand>
</feature>
<feature type="binding site" evidence="1">
    <location>
        <position position="98"/>
    </location>
    <ligand>
        <name>substrate</name>
    </ligand>
</feature>
<feature type="binding site" evidence="1">
    <location>
        <begin position="114"/>
        <end position="115"/>
    </location>
    <ligand>
        <name>substrate</name>
    </ligand>
</feature>
<feature type="binding site" evidence="1">
    <location>
        <begin position="183"/>
        <end position="184"/>
    </location>
    <ligand>
        <name>substrate</name>
    </ligand>
</feature>
<feature type="site" description="Transition state stabilizer" evidence="1">
    <location>
        <position position="182"/>
    </location>
</feature>
<evidence type="ECO:0000255" key="1">
    <source>
        <dbReference type="HAMAP-Rule" id="MF_01039"/>
    </source>
</evidence>
<reference key="1">
    <citation type="journal article" date="2008" name="BMC Genomics">
        <title>The missing link: Bordetella petrii is endowed with both the metabolic versatility of environmental bacteria and virulence traits of pathogenic Bordetellae.</title>
        <authorList>
            <person name="Gross R."/>
            <person name="Guzman C.A."/>
            <person name="Sebaihia M."/>
            <person name="Martin dos Santos V.A.P."/>
            <person name="Pieper D.H."/>
            <person name="Koebnik R."/>
            <person name="Lechner M."/>
            <person name="Bartels D."/>
            <person name="Buhrmester J."/>
            <person name="Choudhuri J.V."/>
            <person name="Ebensen T."/>
            <person name="Gaigalat L."/>
            <person name="Herrmann S."/>
            <person name="Khachane A.N."/>
            <person name="Larisch C."/>
            <person name="Link S."/>
            <person name="Linke B."/>
            <person name="Meyer F."/>
            <person name="Mormann S."/>
            <person name="Nakunst D."/>
            <person name="Rueckert C."/>
            <person name="Schneiker-Bekel S."/>
            <person name="Schulze K."/>
            <person name="Voerholter F.-J."/>
            <person name="Yevsa T."/>
            <person name="Engle J.T."/>
            <person name="Goldman W.E."/>
            <person name="Puehler A."/>
            <person name="Goebel U.B."/>
            <person name="Goesmann A."/>
            <person name="Bloecker H."/>
            <person name="Kaiser O."/>
            <person name="Martinez-Arias R."/>
        </authorList>
    </citation>
    <scope>NUCLEOTIDE SEQUENCE [LARGE SCALE GENOMIC DNA]</scope>
    <source>
        <strain>ATCC BAA-461 / DSM 12804 / CCUG 43448</strain>
    </source>
</reference>
<comment type="function">
    <text evidence="1">Catalyzes the interconversion of 2-phosphoglycerate and 3-phosphoglycerate.</text>
</comment>
<comment type="catalytic activity">
    <reaction evidence="1">
        <text>(2R)-2-phosphoglycerate = (2R)-3-phosphoglycerate</text>
        <dbReference type="Rhea" id="RHEA:15901"/>
        <dbReference type="ChEBI" id="CHEBI:58272"/>
        <dbReference type="ChEBI" id="CHEBI:58289"/>
        <dbReference type="EC" id="5.4.2.11"/>
    </reaction>
</comment>
<comment type="pathway">
    <text evidence="1">Carbohydrate degradation; glycolysis; pyruvate from D-glyceraldehyde 3-phosphate: step 3/5.</text>
</comment>
<comment type="subunit">
    <text evidence="1">Homodimer.</text>
</comment>
<comment type="similarity">
    <text evidence="1">Belongs to the phosphoglycerate mutase family. BPG-dependent PGAM subfamily.</text>
</comment>
<protein>
    <recommendedName>
        <fullName evidence="1">2,3-bisphosphoglycerate-dependent phosphoglycerate mutase</fullName>
        <shortName evidence="1">BPG-dependent PGAM</shortName>
        <shortName evidence="1">PGAM</shortName>
        <shortName evidence="1">Phosphoglyceromutase</shortName>
        <shortName evidence="1">dPGM</shortName>
        <ecNumber evidence="1">5.4.2.11</ecNumber>
    </recommendedName>
</protein>
<organism>
    <name type="scientific">Bordetella petrii (strain ATCC BAA-461 / DSM 12804 / CCUG 43448)</name>
    <dbReference type="NCBI Taxonomy" id="340100"/>
    <lineage>
        <taxon>Bacteria</taxon>
        <taxon>Pseudomonadati</taxon>
        <taxon>Pseudomonadota</taxon>
        <taxon>Betaproteobacteria</taxon>
        <taxon>Burkholderiales</taxon>
        <taxon>Alcaligenaceae</taxon>
        <taxon>Bordetella</taxon>
    </lineage>
</organism>
<sequence>MYKLVLMRHGESQWNLENRFTGWTDVDLTETGREQARKAGELLKKEGYQFDLAYTSVLKRAIRTLWIALDAMDAMYTPVGISWRLNERHYGNLQGLNKAETAAKYGDEQVLIWRRAYAIAPEPLPLDDERHPRFDSRYAKIPADQLPATECLQDTVARVLPYWNDSIAPAIRAGRRVLVAAHGNSLRALIKHLDNISDDDIVGLNIPTGQPLVYELDEALRPIRHYYLGDAAEIEAAMAAVAAQGKAKKD</sequence>